<reference evidence="9 10" key="1">
    <citation type="journal article" date="2007" name="J. Exp. Bot.">
        <title>Molecular cloning of a bifunctional beta-xylosidase/alpha-L-arabinosidase from alfalfa roots: heterologous expression in Medicago truncatula and substrate specificity of the purified enzyme.</title>
        <authorList>
            <person name="Xiong J.S."/>
            <person name="Balland-Vanney M."/>
            <person name="Xie Z.P."/>
            <person name="Schultze M."/>
            <person name="Kondorosi A."/>
            <person name="Kondorosi E."/>
            <person name="Staehelin C."/>
        </authorList>
    </citation>
    <scope>NUCLEOTIDE SEQUENCE [MRNA]</scope>
    <source>
        <strain evidence="7">cv. A2</strain>
        <tissue evidence="10">Root nodule</tissue>
    </source>
</reference>
<gene>
    <name evidence="10" type="primary">Xyl2</name>
</gene>
<feature type="signal peptide" evidence="6">
    <location>
        <begin position="1"/>
        <end position="33"/>
    </location>
</feature>
<feature type="chain" id="PRO_0000392641" description="Beta-xylosidase/alpha-L-arabinofuranosidase 2" evidence="6">
    <location>
        <begin position="34"/>
        <end position="774"/>
    </location>
</feature>
<feature type="active site" evidence="4">
    <location>
        <position position="303"/>
    </location>
</feature>
<feature type="glycosylation site" description="N-linked (GlcNAc...) asparagine" evidence="6">
    <location>
        <position position="136"/>
    </location>
</feature>
<feature type="glycosylation site" description="N-linked (GlcNAc...) asparagine" evidence="6">
    <location>
        <position position="437"/>
    </location>
</feature>
<name>XYL2_MEDSV</name>
<keyword id="KW-0119">Carbohydrate metabolism</keyword>
<keyword id="KW-0272">Extracellular matrix</keyword>
<keyword id="KW-0325">Glycoprotein</keyword>
<keyword id="KW-0326">Glycosidase</keyword>
<keyword id="KW-0378">Hydrolase</keyword>
<keyword id="KW-0511">Multifunctional enzyme</keyword>
<keyword id="KW-0624">Polysaccharide degradation</keyword>
<keyword id="KW-0964">Secreted</keyword>
<keyword id="KW-0732">Signal</keyword>
<keyword id="KW-0858">Xylan degradation</keyword>
<evidence type="ECO:0000250" key="1"/>
<evidence type="ECO:0000250" key="2">
    <source>
        <dbReference type="UniProtKB" id="A5JTQ2"/>
    </source>
</evidence>
<evidence type="ECO:0000250" key="3">
    <source>
        <dbReference type="UniProtKB" id="P48792"/>
    </source>
</evidence>
<evidence type="ECO:0000250" key="4">
    <source>
        <dbReference type="UniProtKB" id="Q9FGY1"/>
    </source>
</evidence>
<evidence type="ECO:0000250" key="5">
    <source>
        <dbReference type="UniProtKB" id="Q9FLG1"/>
    </source>
</evidence>
<evidence type="ECO:0000255" key="6"/>
<evidence type="ECO:0000269" key="7">
    <source>
    </source>
</evidence>
<evidence type="ECO:0000303" key="8">
    <source>
    </source>
</evidence>
<evidence type="ECO:0000305" key="9"/>
<evidence type="ECO:0000312" key="10">
    <source>
        <dbReference type="EMBL" id="ABQ45228.1"/>
    </source>
</evidence>
<protein>
    <recommendedName>
        <fullName evidence="8 10">Beta-xylosidase/alpha-L-arabinofuranosidase 2</fullName>
    </recommendedName>
    <alternativeName>
        <fullName>Xylan 1,4-beta-xylosidase/Alpha-L-arabinofuranosidase 2</fullName>
        <shortName evidence="8">MsXyl2</shortName>
    </alternativeName>
    <domain>
        <recommendedName>
            <fullName>Beta-xylosidase</fullName>
            <ecNumber>3.2.1.37</ecNumber>
        </recommendedName>
        <alternativeName>
            <fullName evidence="3">1,4-beta-D-xylan xylohydrolase</fullName>
        </alternativeName>
        <alternativeName>
            <fullName>Xylan 1,4-beta-xylosidase</fullName>
        </alternativeName>
    </domain>
    <domain>
        <recommendedName>
            <fullName>Alpha-L-arabinofuranosidase</fullName>
            <shortName evidence="3">Arabinosidase</shortName>
            <ecNumber>3.2.1.55</ecNumber>
        </recommendedName>
    </domain>
</protein>
<accession>A5JTQ3</accession>
<sequence length="774" mass="83383">MASVENRTPNVSVFLCFFVLFATLLLSGGRVSSQTSAVFACDVAKNPALANYGFCNKKLSVDARVKDLVRRLTLQEKVGNLVNSAVDVSRLGIPKYEWWSEALHGVSNIGPGTHFSNVIPGATSFPMPILIAASFNASLFQTIGKVVSTEARAMHNVGLAGLTYWSPNINIFRDPRWGRGQETPGEDPLLASKYAAGYVKGLQQTDDGDSNKLKVAACCKHYTAYDVDDWKGVQRYTFNAVVTQQDLDDTYQPPFKSCVIDGNVASVMCSYNQVNGKPTCADPDLLKGVIRGKWKLNGYIVSDCDSVDVLFKNQHYTKTPEEAAAKSILAGLDLNCGSFLGRYTEGAVKQGLIGEASINNAVYNNFATLMRLGFFDGDPSKQPYGNLGPKDVCTSANQELAREAARQGIVLLKNCAGSLPLNAKAIKSLAVIGPNANATRAMIGNYEGIPCKYTSPLQGLTALVPTSFAAGCPDVQCTNAALDDAKKIAASADATVIVVGANLAIEAESHDRINILLPGQQQQLVTEVANVAKGPVILAIMSGGGMDVSFAKTNKKITSILWVGYPGEAGGAAIADVIFGYHNPSGRLPMTWYPQSYVDKVPMTNMNMRPDPATGYPGRTYRFYKGETVFSFGDGISYSTFEHKLVKAPQLVSVPLAEDHVCRSSKCKSLDVVGEHCQNLAFDIHLRIKNKGKMSSSQTVFLFSTPPAVHNAPQKHLLAFEKVLLTGKSEALVSFKVDVCKDLGLVDELGNRKVALGKHMLHVGDLKHPLSVMI</sequence>
<dbReference type="EC" id="3.2.1.37"/>
<dbReference type="EC" id="3.2.1.55"/>
<dbReference type="EMBL" id="EF569969">
    <property type="protein sequence ID" value="ABQ45228.1"/>
    <property type="molecule type" value="mRNA"/>
</dbReference>
<dbReference type="SMR" id="A5JTQ3"/>
<dbReference type="CAZy" id="GH3">
    <property type="family name" value="Glycoside Hydrolase Family 3"/>
</dbReference>
<dbReference type="GlyCosmos" id="A5JTQ3">
    <property type="glycosylation" value="2 sites, No reported glycans"/>
</dbReference>
<dbReference type="GO" id="GO:0048046">
    <property type="term" value="C:apoplast"/>
    <property type="evidence" value="ECO:0007669"/>
    <property type="project" value="TreeGrafter"/>
</dbReference>
<dbReference type="GO" id="GO:0046556">
    <property type="term" value="F:alpha-L-arabinofuranosidase activity"/>
    <property type="evidence" value="ECO:0007669"/>
    <property type="project" value="UniProtKB-EC"/>
</dbReference>
<dbReference type="GO" id="GO:0009044">
    <property type="term" value="F:xylan 1,4-beta-xylosidase activity"/>
    <property type="evidence" value="ECO:0007669"/>
    <property type="project" value="UniProtKB-EC"/>
</dbReference>
<dbReference type="GO" id="GO:0031222">
    <property type="term" value="P:arabinan catabolic process"/>
    <property type="evidence" value="ECO:0007669"/>
    <property type="project" value="TreeGrafter"/>
</dbReference>
<dbReference type="GO" id="GO:0045493">
    <property type="term" value="P:xylan catabolic process"/>
    <property type="evidence" value="ECO:0007669"/>
    <property type="project" value="UniProtKB-KW"/>
</dbReference>
<dbReference type="FunFam" id="2.60.40.10:FF:001384">
    <property type="entry name" value="Beta-D-xylosidase 4"/>
    <property type="match status" value="1"/>
</dbReference>
<dbReference type="FunFam" id="3.40.50.1700:FF:000001">
    <property type="entry name" value="probable beta-D-xylosidase 2"/>
    <property type="match status" value="1"/>
</dbReference>
<dbReference type="FunFam" id="3.20.20.300:FF:000004">
    <property type="entry name" value="probable beta-D-xylosidase 7"/>
    <property type="match status" value="1"/>
</dbReference>
<dbReference type="Gene3D" id="3.40.50.1700">
    <property type="entry name" value="Glycoside hydrolase family 3 C-terminal domain"/>
    <property type="match status" value="1"/>
</dbReference>
<dbReference type="Gene3D" id="3.20.20.300">
    <property type="entry name" value="Glycoside hydrolase, family 3, N-terminal domain"/>
    <property type="match status" value="1"/>
</dbReference>
<dbReference type="Gene3D" id="2.60.40.10">
    <property type="entry name" value="Immunoglobulins"/>
    <property type="match status" value="1"/>
</dbReference>
<dbReference type="InterPro" id="IPR044993">
    <property type="entry name" value="BXL"/>
</dbReference>
<dbReference type="InterPro" id="IPR026891">
    <property type="entry name" value="Fn3-like"/>
</dbReference>
<dbReference type="InterPro" id="IPR002772">
    <property type="entry name" value="Glyco_hydro_3_C"/>
</dbReference>
<dbReference type="InterPro" id="IPR036881">
    <property type="entry name" value="Glyco_hydro_3_C_sf"/>
</dbReference>
<dbReference type="InterPro" id="IPR001764">
    <property type="entry name" value="Glyco_hydro_3_N"/>
</dbReference>
<dbReference type="InterPro" id="IPR036962">
    <property type="entry name" value="Glyco_hydro_3_N_sf"/>
</dbReference>
<dbReference type="InterPro" id="IPR017853">
    <property type="entry name" value="Glycoside_hydrolase_SF"/>
</dbReference>
<dbReference type="InterPro" id="IPR013783">
    <property type="entry name" value="Ig-like_fold"/>
</dbReference>
<dbReference type="PANTHER" id="PTHR42721:SF23">
    <property type="entry name" value="BETA-XYLOSIDASE_ALPHA-L-ARABINOFURANOSIDASE-LIKE PROTEIN"/>
    <property type="match status" value="1"/>
</dbReference>
<dbReference type="PANTHER" id="PTHR42721">
    <property type="entry name" value="SUGAR HYDROLASE-RELATED"/>
    <property type="match status" value="1"/>
</dbReference>
<dbReference type="Pfam" id="PF14310">
    <property type="entry name" value="Fn3-like"/>
    <property type="match status" value="1"/>
</dbReference>
<dbReference type="Pfam" id="PF00933">
    <property type="entry name" value="Glyco_hydro_3"/>
    <property type="match status" value="1"/>
</dbReference>
<dbReference type="Pfam" id="PF01915">
    <property type="entry name" value="Glyco_hydro_3_C"/>
    <property type="match status" value="1"/>
</dbReference>
<dbReference type="PRINTS" id="PR00133">
    <property type="entry name" value="GLHYDRLASE3"/>
</dbReference>
<dbReference type="SMART" id="SM01217">
    <property type="entry name" value="Fn3_like"/>
    <property type="match status" value="1"/>
</dbReference>
<dbReference type="SUPFAM" id="SSF51445">
    <property type="entry name" value="(Trans)glycosidases"/>
    <property type="match status" value="1"/>
</dbReference>
<dbReference type="SUPFAM" id="SSF52279">
    <property type="entry name" value="Beta-D-glucan exohydrolase, C-terminal domain"/>
    <property type="match status" value="1"/>
</dbReference>
<comment type="function">
    <text evidence="1">A bifunctional beta-xylosidase/alpha-L-arabinosidase, exo-enzyme that acts synergistically with endohydrolases. Releases xylose and arabinose from cell walls (By similarity).</text>
</comment>
<comment type="catalytic activity">
    <reaction evidence="2">
        <text>Hydrolysis of (1-&gt;4)-beta-D-xylans, to remove successive D-xylose residues from the non-reducing termini.</text>
        <dbReference type="EC" id="3.2.1.37"/>
    </reaction>
</comment>
<comment type="catalytic activity">
    <reaction evidence="2">
        <text>Hydrolysis of terminal non-reducing alpha-L-arabinofuranoside residues in alpha-L-arabinosides.</text>
        <dbReference type="EC" id="3.2.1.55"/>
    </reaction>
</comment>
<comment type="subcellular location">
    <subcellularLocation>
        <location evidence="5">Secreted</location>
        <location evidence="5">Extracellular space</location>
        <location evidence="5">Extracellular matrix</location>
    </subcellularLocation>
</comment>
<comment type="similarity">
    <text evidence="6">Belongs to the glycoside hydrolase 3 family.</text>
</comment>
<proteinExistence type="evidence at transcript level"/>
<organism>
    <name type="scientific">Medicago sativa subsp. varia</name>
    <name type="common">Alfalfa</name>
    <name type="synonym">Medicago varia</name>
    <dbReference type="NCBI Taxonomy" id="36902"/>
    <lineage>
        <taxon>Eukaryota</taxon>
        <taxon>Viridiplantae</taxon>
        <taxon>Streptophyta</taxon>
        <taxon>Embryophyta</taxon>
        <taxon>Tracheophyta</taxon>
        <taxon>Spermatophyta</taxon>
        <taxon>Magnoliopsida</taxon>
        <taxon>eudicotyledons</taxon>
        <taxon>Gunneridae</taxon>
        <taxon>Pentapetalae</taxon>
        <taxon>rosids</taxon>
        <taxon>fabids</taxon>
        <taxon>Fabales</taxon>
        <taxon>Fabaceae</taxon>
        <taxon>Papilionoideae</taxon>
        <taxon>50 kb inversion clade</taxon>
        <taxon>NPAAA clade</taxon>
        <taxon>Hologalegina</taxon>
        <taxon>IRL clade</taxon>
        <taxon>Trifolieae</taxon>
        <taxon>Medicago</taxon>
    </lineage>
</organism>